<name>REX_STRMU</name>
<accession>Q8DU91</accession>
<organism>
    <name type="scientific">Streptococcus mutans serotype c (strain ATCC 700610 / UA159)</name>
    <dbReference type="NCBI Taxonomy" id="210007"/>
    <lineage>
        <taxon>Bacteria</taxon>
        <taxon>Bacillati</taxon>
        <taxon>Bacillota</taxon>
        <taxon>Bacilli</taxon>
        <taxon>Lactobacillales</taxon>
        <taxon>Streptococcaceae</taxon>
        <taxon>Streptococcus</taxon>
    </lineage>
</organism>
<gene>
    <name evidence="1" type="primary">rex</name>
    <name type="ordered locus">SMU_1053</name>
</gene>
<protein>
    <recommendedName>
        <fullName evidence="1">Redox-sensing transcriptional repressor Rex</fullName>
    </recommendedName>
</protein>
<evidence type="ECO:0000255" key="1">
    <source>
        <dbReference type="HAMAP-Rule" id="MF_01131"/>
    </source>
</evidence>
<dbReference type="EMBL" id="AE014133">
    <property type="protein sequence ID" value="AAN58751.1"/>
    <property type="molecule type" value="Genomic_DNA"/>
</dbReference>
<dbReference type="RefSeq" id="NP_721445.1">
    <property type="nucleotide sequence ID" value="NC_004350.2"/>
</dbReference>
<dbReference type="RefSeq" id="WP_002262286.1">
    <property type="nucleotide sequence ID" value="NC_004350.2"/>
</dbReference>
<dbReference type="SMR" id="Q8DU91"/>
<dbReference type="STRING" id="210007.SMU_1053"/>
<dbReference type="KEGG" id="smu:SMU_1053"/>
<dbReference type="PATRIC" id="fig|210007.7.peg.941"/>
<dbReference type="eggNOG" id="COG2344">
    <property type="taxonomic scope" value="Bacteria"/>
</dbReference>
<dbReference type="HOGENOM" id="CLU_061534_1_1_9"/>
<dbReference type="OrthoDB" id="9784760at2"/>
<dbReference type="PhylomeDB" id="Q8DU91"/>
<dbReference type="Proteomes" id="UP000002512">
    <property type="component" value="Chromosome"/>
</dbReference>
<dbReference type="GO" id="GO:0005737">
    <property type="term" value="C:cytoplasm"/>
    <property type="evidence" value="ECO:0007669"/>
    <property type="project" value="UniProtKB-SubCell"/>
</dbReference>
<dbReference type="GO" id="GO:0003677">
    <property type="term" value="F:DNA binding"/>
    <property type="evidence" value="ECO:0007669"/>
    <property type="project" value="UniProtKB-UniRule"/>
</dbReference>
<dbReference type="GO" id="GO:0003700">
    <property type="term" value="F:DNA-binding transcription factor activity"/>
    <property type="evidence" value="ECO:0007669"/>
    <property type="project" value="UniProtKB-UniRule"/>
</dbReference>
<dbReference type="GO" id="GO:0045892">
    <property type="term" value="P:negative regulation of DNA-templated transcription"/>
    <property type="evidence" value="ECO:0007669"/>
    <property type="project" value="InterPro"/>
</dbReference>
<dbReference type="GO" id="GO:0051775">
    <property type="term" value="P:response to redox state"/>
    <property type="evidence" value="ECO:0007669"/>
    <property type="project" value="InterPro"/>
</dbReference>
<dbReference type="Gene3D" id="3.40.50.720">
    <property type="entry name" value="NAD(P)-binding Rossmann-like Domain"/>
    <property type="match status" value="1"/>
</dbReference>
<dbReference type="Gene3D" id="1.10.10.10">
    <property type="entry name" value="Winged helix-like DNA-binding domain superfamily/Winged helix DNA-binding domain"/>
    <property type="match status" value="1"/>
</dbReference>
<dbReference type="HAMAP" id="MF_01131">
    <property type="entry name" value="Rex"/>
    <property type="match status" value="1"/>
</dbReference>
<dbReference type="InterPro" id="IPR003781">
    <property type="entry name" value="CoA-bd"/>
</dbReference>
<dbReference type="InterPro" id="IPR036291">
    <property type="entry name" value="NAD(P)-bd_dom_sf"/>
</dbReference>
<dbReference type="InterPro" id="IPR009718">
    <property type="entry name" value="Rex_DNA-bd_C_dom"/>
</dbReference>
<dbReference type="InterPro" id="IPR022876">
    <property type="entry name" value="Tscrpt_rep_Rex"/>
</dbReference>
<dbReference type="InterPro" id="IPR036388">
    <property type="entry name" value="WH-like_DNA-bd_sf"/>
</dbReference>
<dbReference type="InterPro" id="IPR036390">
    <property type="entry name" value="WH_DNA-bd_sf"/>
</dbReference>
<dbReference type="NCBIfam" id="NF003988">
    <property type="entry name" value="PRK05472.1-1"/>
    <property type="match status" value="1"/>
</dbReference>
<dbReference type="NCBIfam" id="NF003989">
    <property type="entry name" value="PRK05472.1-3"/>
    <property type="match status" value="1"/>
</dbReference>
<dbReference type="NCBIfam" id="NF003991">
    <property type="entry name" value="PRK05472.1-5"/>
    <property type="match status" value="1"/>
</dbReference>
<dbReference type="NCBIfam" id="NF003994">
    <property type="entry name" value="PRK05472.2-3"/>
    <property type="match status" value="1"/>
</dbReference>
<dbReference type="NCBIfam" id="NF003995">
    <property type="entry name" value="PRK05472.2-4"/>
    <property type="match status" value="1"/>
</dbReference>
<dbReference type="NCBIfam" id="NF003996">
    <property type="entry name" value="PRK05472.2-5"/>
    <property type="match status" value="1"/>
</dbReference>
<dbReference type="PANTHER" id="PTHR35786">
    <property type="entry name" value="REDOX-SENSING TRANSCRIPTIONAL REPRESSOR REX"/>
    <property type="match status" value="1"/>
</dbReference>
<dbReference type="PANTHER" id="PTHR35786:SF1">
    <property type="entry name" value="REDOX-SENSING TRANSCRIPTIONAL REPRESSOR REX 1"/>
    <property type="match status" value="1"/>
</dbReference>
<dbReference type="Pfam" id="PF02629">
    <property type="entry name" value="CoA_binding"/>
    <property type="match status" value="1"/>
</dbReference>
<dbReference type="Pfam" id="PF06971">
    <property type="entry name" value="Put_DNA-bind_N"/>
    <property type="match status" value="1"/>
</dbReference>
<dbReference type="SMART" id="SM00881">
    <property type="entry name" value="CoA_binding"/>
    <property type="match status" value="1"/>
</dbReference>
<dbReference type="SUPFAM" id="SSF51735">
    <property type="entry name" value="NAD(P)-binding Rossmann-fold domains"/>
    <property type="match status" value="1"/>
</dbReference>
<dbReference type="SUPFAM" id="SSF46785">
    <property type="entry name" value="Winged helix' DNA-binding domain"/>
    <property type="match status" value="1"/>
</dbReference>
<reference key="1">
    <citation type="journal article" date="2002" name="Proc. Natl. Acad. Sci. U.S.A.">
        <title>Genome sequence of Streptococcus mutans UA159, a cariogenic dental pathogen.</title>
        <authorList>
            <person name="Ajdic D.J."/>
            <person name="McShan W.M."/>
            <person name="McLaughlin R.E."/>
            <person name="Savic G."/>
            <person name="Chang J."/>
            <person name="Carson M.B."/>
            <person name="Primeaux C."/>
            <person name="Tian R."/>
            <person name="Kenton S."/>
            <person name="Jia H.G."/>
            <person name="Lin S.P."/>
            <person name="Qian Y."/>
            <person name="Li S."/>
            <person name="Zhu H."/>
            <person name="Najar F.Z."/>
            <person name="Lai H."/>
            <person name="White J."/>
            <person name="Roe B.A."/>
            <person name="Ferretti J.J."/>
        </authorList>
    </citation>
    <scope>NUCLEOTIDE SEQUENCE [LARGE SCALE GENOMIC DNA]</scope>
    <source>
        <strain>ATCC 700610 / UA159</strain>
    </source>
</reference>
<proteinExistence type="inferred from homology"/>
<comment type="function">
    <text evidence="1">Modulates transcription in response to changes in cellular NADH/NAD(+) redox state.</text>
</comment>
<comment type="subunit">
    <text evidence="1">Homodimer.</text>
</comment>
<comment type="subcellular location">
    <subcellularLocation>
        <location evidence="1">Cytoplasm</location>
    </subcellularLocation>
</comment>
<comment type="similarity">
    <text evidence="1">Belongs to the transcriptional regulatory Rex family.</text>
</comment>
<keyword id="KW-0963">Cytoplasm</keyword>
<keyword id="KW-0238">DNA-binding</keyword>
<keyword id="KW-0520">NAD</keyword>
<keyword id="KW-1185">Reference proteome</keyword>
<keyword id="KW-0678">Repressor</keyword>
<keyword id="KW-0804">Transcription</keyword>
<keyword id="KW-0805">Transcription regulation</keyword>
<feature type="chain" id="PRO_0000097917" description="Redox-sensing transcriptional repressor Rex">
    <location>
        <begin position="1"/>
        <end position="213"/>
    </location>
</feature>
<feature type="DNA-binding region" description="H-T-H motif" evidence="1">
    <location>
        <begin position="17"/>
        <end position="56"/>
    </location>
</feature>
<feature type="binding site" evidence="1">
    <location>
        <begin position="91"/>
        <end position="96"/>
    </location>
    <ligand>
        <name>NAD(+)</name>
        <dbReference type="ChEBI" id="CHEBI:57540"/>
    </ligand>
</feature>
<sequence>MTFDKTIPKATIKRLSLYYRIFKRFHSENIEKASSKQIAEAIGIDSATVRRDFSYFGELGRRGFGYDVKKLMNFFADILNDTSTTNVLLVGVGNIGRALLNYRFHERNKMKIAMAFDTDDNEQVGQTTSDGIPIYGISSIKEKLIGTDVQTAILTVPSSKAQEVANILIDAGIKGILCFSPVHLSLPKGVVAQYVDLTSELQTLLYFMNQEQF</sequence>